<evidence type="ECO:0000255" key="1">
    <source>
        <dbReference type="HAMAP-Rule" id="MF_03005"/>
    </source>
</evidence>
<evidence type="ECO:0000255" key="2">
    <source>
        <dbReference type="PROSITE-ProRule" id="PRU01182"/>
    </source>
</evidence>
<evidence type="ECO:0000256" key="3">
    <source>
        <dbReference type="SAM" id="MobiDB-lite"/>
    </source>
</evidence>
<evidence type="ECO:0000269" key="4">
    <source>
    </source>
</evidence>
<evidence type="ECO:0000269" key="5">
    <source>
    </source>
</evidence>
<evidence type="ECO:0000269" key="6">
    <source>
    </source>
</evidence>
<evidence type="ECO:0000269" key="7">
    <source>
    </source>
</evidence>
<evidence type="ECO:0000269" key="8">
    <source>
    </source>
</evidence>
<evidence type="ECO:0000269" key="9">
    <source>
    </source>
</evidence>
<evidence type="ECO:0000269" key="10">
    <source>
    </source>
</evidence>
<evidence type="ECO:0000269" key="11">
    <source>
    </source>
</evidence>
<evidence type="ECO:0000269" key="12">
    <source>
    </source>
</evidence>
<evidence type="ECO:0000269" key="13">
    <source>
    </source>
</evidence>
<evidence type="ECO:0000269" key="14">
    <source>
    </source>
</evidence>
<evidence type="ECO:0000305" key="15"/>
<evidence type="ECO:0007744" key="16">
    <source>
    </source>
</evidence>
<evidence type="ECO:0007744" key="17">
    <source>
    </source>
</evidence>
<evidence type="ECO:0007744" key="18">
    <source>
    </source>
</evidence>
<evidence type="ECO:0007829" key="19">
    <source>
        <dbReference type="PDB" id="6YBD"/>
    </source>
</evidence>
<evidence type="ECO:0007829" key="20">
    <source>
        <dbReference type="PDB" id="8RG0"/>
    </source>
</evidence>
<feature type="initiator methionine" description="Removed" evidence="1 7">
    <location>
        <position position="1"/>
    </location>
</feature>
<feature type="chain" id="PRO_0000213964" description="Eukaryotic translation initiation factor 3 subunit F">
    <location>
        <begin position="2"/>
        <end position="357"/>
    </location>
</feature>
<feature type="domain" description="MPN" evidence="2">
    <location>
        <begin position="92"/>
        <end position="222"/>
    </location>
</feature>
<feature type="region of interest" description="Disordered" evidence="3">
    <location>
        <begin position="1"/>
        <end position="82"/>
    </location>
</feature>
<feature type="compositionally biased region" description="Pro residues" evidence="3">
    <location>
        <begin position="9"/>
        <end position="36"/>
    </location>
</feature>
<feature type="compositionally biased region" description="Low complexity" evidence="3">
    <location>
        <begin position="37"/>
        <end position="74"/>
    </location>
</feature>
<feature type="modified residue" description="N-acetylalanine" evidence="1 7">
    <location>
        <position position="2"/>
    </location>
</feature>
<feature type="modified residue" description="Phosphoserine; by CDK11; in vitro" evidence="1 4">
    <location>
        <position position="46"/>
    </location>
</feature>
<feature type="modified residue" description="N6-acetyllysine" evidence="17">
    <location>
        <position position="238"/>
    </location>
</feature>
<feature type="modified residue" description="Phosphoserine" evidence="1 7 16 18">
    <location>
        <position position="258"/>
    </location>
</feature>
<feature type="sequence variant" id="VAR_029267" description="In dbSNP:rs1043738.">
    <original>P</original>
    <variation>L</variation>
    <location>
        <position position="39"/>
    </location>
</feature>
<feature type="sequence variant" id="VAR_014452" description="In dbSNP:rs1044058.">
    <original>W</original>
    <variation>L</variation>
    <location>
        <position position="172"/>
    </location>
</feature>
<feature type="sequence variant" id="VAR_081783" description="In MRT67; decreased protein abundance; dbSNP:rs141976414." evidence="14">
    <original>F</original>
    <variation>V</variation>
    <location>
        <position position="232"/>
    </location>
</feature>
<feature type="sequence conflict" description="In Ref. 2; BAC04577." evidence="15" ref="2">
    <location>
        <begin position="50"/>
        <end position="56"/>
    </location>
</feature>
<feature type="strand" evidence="19">
    <location>
        <begin position="91"/>
        <end position="93"/>
    </location>
</feature>
<feature type="helix" evidence="19">
    <location>
        <begin position="96"/>
        <end position="105"/>
    </location>
</feature>
<feature type="turn" evidence="19">
    <location>
        <begin position="106"/>
        <end position="111"/>
    </location>
</feature>
<feature type="strand" evidence="20">
    <location>
        <begin position="112"/>
        <end position="114"/>
    </location>
</feature>
<feature type="strand" evidence="19">
    <location>
        <begin position="118"/>
        <end position="122"/>
    </location>
</feature>
<feature type="strand" evidence="19">
    <location>
        <begin position="126"/>
        <end position="130"/>
    </location>
</feature>
<feature type="strand" evidence="19">
    <location>
        <begin position="133"/>
        <end position="135"/>
    </location>
</feature>
<feature type="helix" evidence="19">
    <location>
        <begin position="150"/>
        <end position="163"/>
    </location>
</feature>
<feature type="strand" evidence="19">
    <location>
        <begin position="168"/>
        <end position="176"/>
    </location>
</feature>
<feature type="strand" evidence="19">
    <location>
        <begin position="178"/>
        <end position="180"/>
    </location>
</feature>
<feature type="helix" evidence="19">
    <location>
        <begin position="181"/>
        <end position="193"/>
    </location>
</feature>
<feature type="strand" evidence="19">
    <location>
        <begin position="199"/>
        <end position="202"/>
    </location>
</feature>
<feature type="strand" evidence="19">
    <location>
        <begin position="208"/>
        <end position="210"/>
    </location>
</feature>
<feature type="strand" evidence="19">
    <location>
        <begin position="212"/>
        <end position="214"/>
    </location>
</feature>
<feature type="strand" evidence="20">
    <location>
        <begin position="236"/>
        <end position="239"/>
    </location>
</feature>
<feature type="strand" evidence="19">
    <location>
        <begin position="242"/>
        <end position="244"/>
    </location>
</feature>
<feature type="helix" evidence="19">
    <location>
        <begin position="245"/>
        <end position="254"/>
    </location>
</feature>
<feature type="helix" evidence="19">
    <location>
        <begin position="266"/>
        <end position="289"/>
    </location>
</feature>
<feature type="turn" evidence="19">
    <location>
        <begin position="290"/>
        <end position="293"/>
    </location>
</feature>
<feature type="turn" evidence="19">
    <location>
        <begin position="295"/>
        <end position="300"/>
    </location>
</feature>
<feature type="helix" evidence="19">
    <location>
        <begin position="301"/>
        <end position="305"/>
    </location>
</feature>
<feature type="helix" evidence="19">
    <location>
        <begin position="306"/>
        <end position="314"/>
    </location>
</feature>
<feature type="helix" evidence="19">
    <location>
        <begin position="320"/>
        <end position="352"/>
    </location>
</feature>
<feature type="turn" evidence="19">
    <location>
        <begin position="353"/>
        <end position="355"/>
    </location>
</feature>
<organism>
    <name type="scientific">Homo sapiens</name>
    <name type="common">Human</name>
    <dbReference type="NCBI Taxonomy" id="9606"/>
    <lineage>
        <taxon>Eukaryota</taxon>
        <taxon>Metazoa</taxon>
        <taxon>Chordata</taxon>
        <taxon>Craniata</taxon>
        <taxon>Vertebrata</taxon>
        <taxon>Euteleostomi</taxon>
        <taxon>Mammalia</taxon>
        <taxon>Eutheria</taxon>
        <taxon>Euarchontoglires</taxon>
        <taxon>Primates</taxon>
        <taxon>Haplorrhini</taxon>
        <taxon>Catarrhini</taxon>
        <taxon>Hominidae</taxon>
        <taxon>Homo</taxon>
    </lineage>
</organism>
<keyword id="KW-0002">3D-structure</keyword>
<keyword id="KW-0007">Acetylation</keyword>
<keyword id="KW-0963">Cytoplasm</keyword>
<keyword id="KW-0225">Disease variant</keyword>
<keyword id="KW-0378">Hydrolase</keyword>
<keyword id="KW-0396">Initiation factor</keyword>
<keyword id="KW-0991">Intellectual disability</keyword>
<keyword id="KW-0597">Phosphoprotein</keyword>
<keyword id="KW-0645">Protease</keyword>
<keyword id="KW-0648">Protein biosynthesis</keyword>
<keyword id="KW-1267">Proteomics identification</keyword>
<keyword id="KW-1185">Reference proteome</keyword>
<keyword id="KW-0788">Thiol protease</keyword>
<keyword id="KW-0833">Ubl conjugation pathway</keyword>
<proteinExistence type="evidence at protein level"/>
<sequence length="357" mass="37564">MATPAVPVSAPPATPTPVPAAAPASVPAPTPAPAAAPVPAAAPASSSDPAAAAAATAAPGQTPASAQAPAQTPAPALPGPALPGPFPGGRVVRLHPVILASIVDSYERRNEGAARVIGTLLGTVDKHSVEVTNCFSVPHNESEDEVAVDMEFAKNMYELHKKVSPNELILGWYATGHDITEHSVLIHEYYSREAPNPIHLTVDTSLQNGRMSIKAYVSTLMGVPGRTMGVMFTPLTVKYAYYDTERIGVDLIMKTCFSPNRVIGLSSDLQQVGGASARIQDALSTVLQYAEDVLSGKVSADNTVGRFLMSLVNQVPKIVPDDFETMLNSNINDLLMVTYLANLTQSQIALNEKLVNL</sequence>
<comment type="function">
    <text evidence="1 8 12 13">Component of the eukaryotic translation initiation factor 3 (eIF-3) complex, which is required for several steps in the initiation of protein synthesis (PubMed:17581632, PubMed:25849773, PubMed:27462815). The eIF-3 complex associates with the 40S ribosome and facilitates the recruitment of eIF-1, eIF-1A, eIF-2:GTP:methionyl-tRNAi and eIF-5 to form the 43S pre-initiation complex (43S PIC). The eIF-3 complex stimulates mRNA recruitment to the 43S PIC and scanning of the mRNA for AUG recognition. The eIF-3 complex is also required for disassembly and recycling of post-termination ribosomal complexes and subsequently prevents premature joining of the 40S and 60S ribosomal subunits prior to initiation (PubMed:17581632). The eIF-3 complex specifically targets and initiates translation of a subset of mRNAs involved in cell proliferation, including cell cycling, differentiation and apoptosis, and uses different modes of RNA stem-loop binding to exert either translational activation or repression (PubMed:25849773).</text>
</comment>
<comment type="function">
    <text evidence="11">Deubiquitinates activated NOTCH1, promoting its nuclear import, thereby acting as a positive regulator of Notch signaling.</text>
</comment>
<comment type="catalytic activity">
    <reaction evidence="11">
        <text>Thiol-dependent hydrolysis of ester, thioester, amide, peptide and isopeptide bonds formed by the C-terminal Gly of ubiquitin (a 76-residue protein attached to proteins as an intracellular targeting signal).</text>
        <dbReference type="EC" id="3.4.19.12"/>
    </reaction>
</comment>
<comment type="subunit">
    <text evidence="1 5 6 7 9 10 11 12">Component of the eukaryotic translation initiation factor 3 (eIF-3) complex, which is composed of 13 subunits: EIF3A, EIF3B, EIF3C, EIF3D, EIF3E, EIF3F, EIF3G, EIF3H, EIF3I, EIF3J, EIF3K, EIF3L and EIF3M. The eIF-3 complex appears to include 3 stable modules: module A is composed of EIF3A, EIF3B, EIF3G and EIF3I; module B is composed of EIF3F, EIF3H, and EIF3M; and module C is composed of EIF3C, EIF3D, EIF3E, EIF3K and EIF3L. EIF3C of module C binds EIF3B of module A and EIF3H of module B, thereby linking the three modules. EIF3J is a labile subunit that binds to the eIF-3 complex via EIF3B. The eIF-3 complex interacts with RPS6KB1 under conditions of nutrient depletion. Mitogenic stimulation leads to binding and activation of a complex composed of MTOR and RPTOR, leading to phosphorylation and release of RPS6KB1 and binding of EIF4B to eIF-3. Interacts with RNF139; the interaction leads to protein translation inhibitions in a ubiquitination-dependent manner. Interacts with DTX1, the interaction is required for deubiquitinating activity towards NOTCH1.</text>
</comment>
<comment type="interaction">
    <interactant intactId="EBI-711990">
        <id>O00303</id>
    </interactant>
    <interactant intactId="EBI-712648">
        <id>O95994</id>
        <label>AGR2</label>
    </interactant>
    <organismsDiffer>false</organismsDiffer>
    <experiments>3</experiments>
</comment>
<comment type="interaction">
    <interactant intactId="EBI-711990">
        <id>O00303</id>
    </interactant>
    <interactant intactId="EBI-930964">
        <id>P54253</id>
        <label>ATXN1</label>
    </interactant>
    <organismsDiffer>false</organismsDiffer>
    <experiments>4</experiments>
</comment>
<comment type="interaction">
    <interactant intactId="EBI-711990">
        <id>O00303</id>
    </interactant>
    <interactant intactId="EBI-10988864">
        <id>P46379-2</id>
        <label>BAG6</label>
    </interactant>
    <organismsDiffer>false</organismsDiffer>
    <experiments>3</experiments>
</comment>
<comment type="interaction">
    <interactant intactId="EBI-711990">
        <id>O00303</id>
    </interactant>
    <interactant intactId="EBI-747505">
        <id>Q8TAB5</id>
        <label>C1orf216</label>
    </interactant>
    <organismsDiffer>false</organismsDiffer>
    <experiments>3</experiments>
</comment>
<comment type="interaction">
    <interactant intactId="EBI-711990">
        <id>O00303</id>
    </interactant>
    <interactant intactId="EBI-718729">
        <id>P55212</id>
        <label>CASP6</label>
    </interactant>
    <organismsDiffer>false</organismsDiffer>
    <experiments>3</experiments>
</comment>
<comment type="interaction">
    <interactant intactId="EBI-711990">
        <id>O00303</id>
    </interactant>
    <interactant intactId="EBI-744556">
        <id>Q96HB5</id>
        <label>CCDC120</label>
    </interactant>
    <organismsDiffer>false</organismsDiffer>
    <experiments>3</experiments>
</comment>
<comment type="interaction">
    <interactant intactId="EBI-711990">
        <id>O00303</id>
    </interactant>
    <interactant intactId="EBI-10181422">
        <id>A0A1B0GWI1</id>
        <label>CCDC196</label>
    </interactant>
    <organismsDiffer>false</organismsDiffer>
    <experiments>5</experiments>
</comment>
<comment type="interaction">
    <interactant intactId="EBI-711990">
        <id>O00303</id>
    </interactant>
    <interactant intactId="EBI-1298">
        <id>P21127</id>
        <label>CDK11B</label>
    </interactant>
    <organismsDiffer>false</organismsDiffer>
    <experiments>3</experiments>
</comment>
<comment type="interaction">
    <interactant intactId="EBI-711990">
        <id>O00303</id>
    </interactant>
    <interactant intactId="EBI-983038">
        <id>P08123</id>
        <label>COL1A2</label>
    </interactant>
    <organismsDiffer>false</organismsDiffer>
    <experiments>3</experiments>
</comment>
<comment type="interaction">
    <interactant intactId="EBI-711990">
        <id>O00303</id>
    </interactant>
    <interactant intactId="EBI-446479">
        <id>P99999</id>
        <label>CYCS</label>
    </interactant>
    <organismsDiffer>false</organismsDiffer>
    <experiments>3</experiments>
</comment>
<comment type="interaction">
    <interactant intactId="EBI-711990">
        <id>O00303</id>
    </interactant>
    <interactant intactId="EBI-10976677">
        <id>G5E9A7</id>
        <label>DMWD</label>
    </interactant>
    <organismsDiffer>false</organismsDiffer>
    <experiments>3</experiments>
</comment>
<comment type="interaction">
    <interactant intactId="EBI-711990">
        <id>O00303</id>
    </interactant>
    <interactant intactId="EBI-395638">
        <id>O14645</id>
        <label>DNALI1</label>
    </interactant>
    <organismsDiffer>false</organismsDiffer>
    <experiments>3</experiments>
</comment>
<comment type="interaction">
    <interactant intactId="EBI-711990">
        <id>O00303</id>
    </interactant>
    <interactant intactId="EBI-366696">
        <id>P55884</id>
        <label>EIF3B</label>
    </interactant>
    <organismsDiffer>false</organismsDiffer>
    <experiments>11</experiments>
</comment>
<comment type="interaction">
    <interactant intactId="EBI-711990">
        <id>O00303</id>
    </interactant>
    <interactant intactId="EBI-711990">
        <id>O00303</id>
        <label>EIF3F</label>
    </interactant>
    <organismsDiffer>false</organismsDiffer>
    <experiments>3</experiments>
</comment>
<comment type="interaction">
    <interactant intactId="EBI-711990">
        <id>O00303</id>
    </interactant>
    <interactant intactId="EBI-709735">
        <id>O15372</id>
        <label>EIF3H</label>
    </interactant>
    <organismsDiffer>false</organismsDiffer>
    <experiments>9</experiments>
</comment>
<comment type="interaction">
    <interactant intactId="EBI-711990">
        <id>O00303</id>
    </interactant>
    <interactant intactId="EBI-353901">
        <id>Q7L2H7</id>
        <label>EIF3M</label>
    </interactant>
    <organismsDiffer>false</organismsDiffer>
    <experiments>21</experiments>
</comment>
<comment type="interaction">
    <interactant intactId="EBI-711990">
        <id>O00303</id>
    </interactant>
    <interactant intactId="EBI-12112376">
        <id>A0A0C4DGQ7</id>
        <label>EML2</label>
    </interactant>
    <organismsDiffer>false</organismsDiffer>
    <experiments>3</experiments>
</comment>
<comment type="interaction">
    <interactant intactId="EBI-711990">
        <id>O00303</id>
    </interactant>
    <interactant intactId="EBI-2807642">
        <id>Q8WU58</id>
        <label>FAM222B</label>
    </interactant>
    <organismsDiffer>false</organismsDiffer>
    <experiments>3</experiments>
</comment>
<comment type="interaction">
    <interactant intactId="EBI-711990">
        <id>O00303</id>
    </interactant>
    <interactant intactId="EBI-2932534">
        <id>Q969P5</id>
        <label>FBXO32</label>
    </interactant>
    <organismsDiffer>false</organismsDiffer>
    <experiments>7</experiments>
</comment>
<comment type="interaction">
    <interactant intactId="EBI-711990">
        <id>O00303</id>
    </interactant>
    <interactant intactId="EBI-1955541">
        <id>Q53GS7</id>
        <label>GLE1</label>
    </interactant>
    <organismsDiffer>false</organismsDiffer>
    <experiments>2</experiments>
</comment>
<comment type="interaction">
    <interactant intactId="EBI-711990">
        <id>O00303</id>
    </interactant>
    <interactant intactId="EBI-740220">
        <id>O14964</id>
        <label>HGS</label>
    </interactant>
    <organismsDiffer>false</organismsDiffer>
    <experiments>3</experiments>
</comment>
<comment type="interaction">
    <interactant intactId="EBI-711990">
        <id>O00303</id>
    </interactant>
    <interactant intactId="EBI-352682">
        <id>P04792</id>
        <label>HSPB1</label>
    </interactant>
    <organismsDiffer>false</organismsDiffer>
    <experiments>3</experiments>
</comment>
<comment type="interaction">
    <interactant intactId="EBI-711990">
        <id>O00303</id>
    </interactant>
    <interactant intactId="EBI-517086">
        <id>O43464</id>
        <label>HTRA2</label>
    </interactant>
    <organismsDiffer>false</organismsDiffer>
    <experiments>3</experiments>
</comment>
<comment type="interaction">
    <interactant intactId="EBI-711990">
        <id>O00303</id>
    </interactant>
    <interactant intactId="EBI-1055254">
        <id>Q8WXH2</id>
        <label>JPH3</label>
    </interactant>
    <organismsDiffer>false</organismsDiffer>
    <experiments>3</experiments>
</comment>
<comment type="interaction">
    <interactant intactId="EBI-711990">
        <id>O00303</id>
    </interactant>
    <interactant intactId="EBI-10975473">
        <id>O60333-2</id>
        <label>KIF1B</label>
    </interactant>
    <organismsDiffer>false</organismsDiffer>
    <experiments>3</experiments>
</comment>
<comment type="interaction">
    <interactant intactId="EBI-711990">
        <id>O00303</id>
    </interactant>
    <interactant intactId="EBI-948266">
        <id>O14901</id>
        <label>KLF11</label>
    </interactant>
    <organismsDiffer>false</organismsDiffer>
    <experiments>3</experiments>
</comment>
<comment type="interaction">
    <interactant intactId="EBI-711990">
        <id>O00303</id>
    </interactant>
    <interactant intactId="EBI-21591415">
        <id>P13473-2</id>
        <label>LAMP2</label>
    </interactant>
    <organismsDiffer>false</organismsDiffer>
    <experiments>3</experiments>
</comment>
<comment type="interaction">
    <interactant intactId="EBI-711990">
        <id>O00303</id>
    </interactant>
    <interactant intactId="EBI-2341005">
        <id>Q9H000</id>
        <label>MKRN2</label>
    </interactant>
    <organismsDiffer>false</organismsDiffer>
    <experiments>3</experiments>
</comment>
<comment type="interaction">
    <interactant intactId="EBI-711990">
        <id>O00303</id>
    </interactant>
    <interactant intactId="EBI-6092777">
        <id>O15457</id>
        <label>MSH4</label>
    </interactant>
    <organismsDiffer>false</organismsDiffer>
    <experiments>6</experiments>
</comment>
<comment type="interaction">
    <interactant intactId="EBI-711990">
        <id>O00303</id>
    </interactant>
    <interactant intactId="EBI-718622">
        <id>Q969H8</id>
        <label>MYDGF</label>
    </interactant>
    <organismsDiffer>false</organismsDiffer>
    <experiments>3</experiments>
</comment>
<comment type="interaction">
    <interactant intactId="EBI-711990">
        <id>O00303</id>
    </interactant>
    <interactant intactId="EBI-744402">
        <id>Q9NP98</id>
        <label>MYOZ1</label>
    </interactant>
    <organismsDiffer>false</organismsDiffer>
    <experiments>3</experiments>
</comment>
<comment type="interaction">
    <interactant intactId="EBI-711990">
        <id>O00303</id>
    </interactant>
    <interactant intactId="EBI-1014514">
        <id>P35240-4</id>
        <label>NF2</label>
    </interactant>
    <organismsDiffer>false</organismsDiffer>
    <experiments>3</experiments>
</comment>
<comment type="interaction">
    <interactant intactId="EBI-711990">
        <id>O00303</id>
    </interactant>
    <interactant intactId="EBI-741048">
        <id>Q7Z3B4</id>
        <label>NUP54</label>
    </interactant>
    <organismsDiffer>false</organismsDiffer>
    <experiments>3</experiments>
</comment>
<comment type="interaction">
    <interactant intactId="EBI-711990">
        <id>O00303</id>
    </interactant>
    <interactant intactId="EBI-2811583">
        <id>Q9BVL2</id>
        <label>NUP58</label>
    </interactant>
    <organismsDiffer>false</organismsDiffer>
    <experiments>3</experiments>
</comment>
<comment type="interaction">
    <interactant intactId="EBI-711990">
        <id>O00303</id>
    </interactant>
    <interactant intactId="EBI-10302990">
        <id>Q9BYU1</id>
        <label>PBX4</label>
    </interactant>
    <organismsDiffer>false</organismsDiffer>
    <experiments>3</experiments>
</comment>
<comment type="interaction">
    <interactant intactId="EBI-711990">
        <id>O00303</id>
    </interactant>
    <interactant intactId="EBI-602382">
        <id>Q16512</id>
        <label>PKN1</label>
    </interactant>
    <organismsDiffer>false</organismsDiffer>
    <experiments>3</experiments>
</comment>
<comment type="interaction">
    <interactant intactId="EBI-711990">
        <id>O00303</id>
    </interactant>
    <interactant intactId="EBI-1389308">
        <id>Q7Z3K3</id>
        <label>POGZ</label>
    </interactant>
    <organismsDiffer>false</organismsDiffer>
    <experiments>3</experiments>
</comment>
<comment type="interaction">
    <interactant intactId="EBI-711990">
        <id>O00303</id>
    </interactant>
    <interactant intactId="EBI-12029004">
        <id>P78424</id>
        <label>POU6F2</label>
    </interactant>
    <organismsDiffer>false</organismsDiffer>
    <experiments>6</experiments>
</comment>
<comment type="interaction">
    <interactant intactId="EBI-711990">
        <id>O00303</id>
    </interactant>
    <interactant intactId="EBI-5280197">
        <id>O75400-2</id>
        <label>PRPF40A</label>
    </interactant>
    <organismsDiffer>false</organismsDiffer>
    <experiments>3</experiments>
</comment>
<comment type="interaction">
    <interactant intactId="EBI-711990">
        <id>O00303</id>
    </interactant>
    <interactant intactId="EBI-749195">
        <id>P60891</id>
        <label>PRPS1</label>
    </interactant>
    <organismsDiffer>false</organismsDiffer>
    <experiments>3</experiments>
</comment>
<comment type="interaction">
    <interactant intactId="EBI-711990">
        <id>O00303</id>
    </interactant>
    <interactant intactId="EBI-713992">
        <id>P47224</id>
        <label>RABIF</label>
    </interactant>
    <organismsDiffer>false</organismsDiffer>
    <experiments>5</experiments>
</comment>
<comment type="interaction">
    <interactant intactId="EBI-711990">
        <id>O00303</id>
    </interactant>
    <interactant intactId="EBI-366017">
        <id>Q13671</id>
        <label>RIN1</label>
    </interactant>
    <organismsDiffer>false</organismsDiffer>
    <experiments>3</experiments>
</comment>
<comment type="interaction">
    <interactant intactId="EBI-711990">
        <id>O00303</id>
    </interactant>
    <interactant intactId="EBI-10217913">
        <id>Q14D33</id>
        <label>RTP5</label>
    </interactant>
    <organismsDiffer>false</organismsDiffer>
    <experiments>3</experiments>
</comment>
<comment type="interaction">
    <interactant intactId="EBI-711990">
        <id>O00303</id>
    </interactant>
    <interactant intactId="EBI-2623095">
        <id>Q9Y371</id>
        <label>SH3GLB1</label>
    </interactant>
    <organismsDiffer>false</organismsDiffer>
    <experiments>3</experiments>
</comment>
<comment type="interaction">
    <interactant intactId="EBI-711990">
        <id>O00303</id>
    </interactant>
    <interactant intactId="EBI-5235340">
        <id>Q7Z699</id>
        <label>SPRED1</label>
    </interactant>
    <organismsDiffer>false</organismsDiffer>
    <experiments>3</experiments>
</comment>
<comment type="interaction">
    <interactant intactId="EBI-711990">
        <id>O00303</id>
    </interactant>
    <interactant intactId="EBI-3921347">
        <id>P51687</id>
        <label>SUOX</label>
    </interactant>
    <organismsDiffer>false</organismsDiffer>
    <experiments>3</experiments>
</comment>
<comment type="interaction">
    <interactant intactId="EBI-711990">
        <id>O00303</id>
    </interactant>
    <interactant intactId="EBI-372899">
        <id>Q13148</id>
        <label>TARDBP</label>
    </interactant>
    <organismsDiffer>false</organismsDiffer>
    <experiments>6</experiments>
</comment>
<comment type="interaction">
    <interactant intactId="EBI-711990">
        <id>O00303</id>
    </interactant>
    <interactant intactId="EBI-1200382">
        <id>Q9Y5J6</id>
        <label>TIMM10B</label>
    </interactant>
    <organismsDiffer>false</organismsDiffer>
    <experiments>3</experiments>
</comment>
<comment type="interaction">
    <interactant intactId="EBI-711990">
        <id>O00303</id>
    </interactant>
    <interactant intactId="EBI-11980193">
        <id>Q14119</id>
        <label>VEZF1</label>
    </interactant>
    <organismsDiffer>false</organismsDiffer>
    <experiments>3</experiments>
</comment>
<comment type="interaction">
    <interactant intactId="EBI-711990">
        <id>O00303</id>
    </interactant>
    <interactant intactId="EBI-720609">
        <id>O76024</id>
        <label>WFS1</label>
    </interactant>
    <organismsDiffer>false</organismsDiffer>
    <experiments>3</experiments>
</comment>
<comment type="interaction">
    <interactant intactId="EBI-711990">
        <id>O00303</id>
    </interactant>
    <interactant intactId="EBI-17234977">
        <id>A0A1U9X8X8</id>
    </interactant>
    <organismsDiffer>false</organismsDiffer>
    <experiments>3</experiments>
</comment>
<comment type="interaction">
    <interactant intactId="EBI-711990">
        <id>O00303</id>
    </interactant>
    <interactant intactId="EBI-6248094">
        <id>Q9Q2G4</id>
        <label>ORF</label>
    </interactant>
    <organismsDiffer>true</organismsDiffer>
    <experiments>3</experiments>
</comment>
<comment type="interaction">
    <interactant intactId="EBI-711990">
        <id>O00303</id>
    </interactant>
    <interactant intactId="EBI-25497861">
        <id>P11223</id>
        <label>S</label>
    </interactant>
    <organismsDiffer>true</organismsDiffer>
    <experiments>2</experiments>
</comment>
<comment type="interaction">
    <interactant intactId="EBI-711990">
        <id>O00303</id>
    </interactant>
    <interactant intactId="EBI-15582614">
        <id>P59594</id>
        <label>S</label>
    </interactant>
    <organismsDiffer>true</organismsDiffer>
    <experiments>5</experiments>
</comment>
<comment type="subcellular location">
    <subcellularLocation>
        <location evidence="1">Cytoplasm</location>
    </subcellularLocation>
</comment>
<comment type="domain">
    <text>The MPN domain mediates deubiquitinating activity.</text>
</comment>
<comment type="PTM">
    <text evidence="4 7">Phosphorylation is enhanced upon serum stimulation. Phosphorylated during apoptosis by caspase-processed CDK11.</text>
</comment>
<comment type="mass spectrometry" mass="37554.8" method="Unknown" evidence="7"/>
<comment type="mass spectrometry" mass="37475.6" error="0.2" method="MALDI" evidence="9"/>
<comment type="disease" evidence="14">
    <disease id="DI-05459">
        <name>Intellectual developmental disorder, autosomal recessive 67</name>
        <acronym>MRT67</acronym>
        <description>A form of intellectual disability, a disorder characterized by significantly below average general intellectual functioning associated with impairments in adaptive behavior and manifested during the developmental period. Some MRT67 patients manifest seizures and sensorineural hearing loss.</description>
        <dbReference type="MIM" id="618295"/>
    </disease>
    <text>The disease may be caused by variants affecting the gene represented in this entry.</text>
</comment>
<comment type="similarity">
    <text evidence="1">Belongs to the eIF-3 subunit F family.</text>
</comment>
<comment type="online information" name="Atlas of Genetics and Cytogenetics in Oncology and Haematology">
    <link uri="https://atlasgeneticsoncology.org/gene/44407/EIF3F"/>
</comment>
<name>EIF3F_HUMAN</name>
<reference key="1">
    <citation type="journal article" date="1997" name="J. Biol. Chem.">
        <title>Structure of cDNAs encoding human eukaryotic initiation factor 3 subunits. Possible roles in RNA binding and macromolecular assembly.</title>
        <authorList>
            <person name="Asano K."/>
            <person name="Vornlocher H.-P."/>
            <person name="Richter-Cook N.J."/>
            <person name="Merrick W.C."/>
            <person name="Hinnebusch A.G."/>
            <person name="Hershey J.W.B."/>
        </authorList>
    </citation>
    <scope>NUCLEOTIDE SEQUENCE [MRNA]</scope>
    <source>
        <tissue>Liver</tissue>
    </source>
</reference>
<reference key="2">
    <citation type="journal article" date="2004" name="Nat. Genet.">
        <title>Complete sequencing and characterization of 21,243 full-length human cDNAs.</title>
        <authorList>
            <person name="Ota T."/>
            <person name="Suzuki Y."/>
            <person name="Nishikawa T."/>
            <person name="Otsuki T."/>
            <person name="Sugiyama T."/>
            <person name="Irie R."/>
            <person name="Wakamatsu A."/>
            <person name="Hayashi K."/>
            <person name="Sato H."/>
            <person name="Nagai K."/>
            <person name="Kimura K."/>
            <person name="Makita H."/>
            <person name="Sekine M."/>
            <person name="Obayashi M."/>
            <person name="Nishi T."/>
            <person name="Shibahara T."/>
            <person name="Tanaka T."/>
            <person name="Ishii S."/>
            <person name="Yamamoto J."/>
            <person name="Saito K."/>
            <person name="Kawai Y."/>
            <person name="Isono Y."/>
            <person name="Nakamura Y."/>
            <person name="Nagahari K."/>
            <person name="Murakami K."/>
            <person name="Yasuda T."/>
            <person name="Iwayanagi T."/>
            <person name="Wagatsuma M."/>
            <person name="Shiratori A."/>
            <person name="Sudo H."/>
            <person name="Hosoiri T."/>
            <person name="Kaku Y."/>
            <person name="Kodaira H."/>
            <person name="Kondo H."/>
            <person name="Sugawara M."/>
            <person name="Takahashi M."/>
            <person name="Kanda K."/>
            <person name="Yokoi T."/>
            <person name="Furuya T."/>
            <person name="Kikkawa E."/>
            <person name="Omura Y."/>
            <person name="Abe K."/>
            <person name="Kamihara K."/>
            <person name="Katsuta N."/>
            <person name="Sato K."/>
            <person name="Tanikawa M."/>
            <person name="Yamazaki M."/>
            <person name="Ninomiya K."/>
            <person name="Ishibashi T."/>
            <person name="Yamashita H."/>
            <person name="Murakawa K."/>
            <person name="Fujimori K."/>
            <person name="Tanai H."/>
            <person name="Kimata M."/>
            <person name="Watanabe M."/>
            <person name="Hiraoka S."/>
            <person name="Chiba Y."/>
            <person name="Ishida S."/>
            <person name="Ono Y."/>
            <person name="Takiguchi S."/>
            <person name="Watanabe S."/>
            <person name="Yosida M."/>
            <person name="Hotuta T."/>
            <person name="Kusano J."/>
            <person name="Kanehori K."/>
            <person name="Takahashi-Fujii A."/>
            <person name="Hara H."/>
            <person name="Tanase T.-O."/>
            <person name="Nomura Y."/>
            <person name="Togiya S."/>
            <person name="Komai F."/>
            <person name="Hara R."/>
            <person name="Takeuchi K."/>
            <person name="Arita M."/>
            <person name="Imose N."/>
            <person name="Musashino K."/>
            <person name="Yuuki H."/>
            <person name="Oshima A."/>
            <person name="Sasaki N."/>
            <person name="Aotsuka S."/>
            <person name="Yoshikawa Y."/>
            <person name="Matsunawa H."/>
            <person name="Ichihara T."/>
            <person name="Shiohata N."/>
            <person name="Sano S."/>
            <person name="Moriya S."/>
            <person name="Momiyama H."/>
            <person name="Satoh N."/>
            <person name="Takami S."/>
            <person name="Terashima Y."/>
            <person name="Suzuki O."/>
            <person name="Nakagawa S."/>
            <person name="Senoh A."/>
            <person name="Mizoguchi H."/>
            <person name="Goto Y."/>
            <person name="Shimizu F."/>
            <person name="Wakebe H."/>
            <person name="Hishigaki H."/>
            <person name="Watanabe T."/>
            <person name="Sugiyama A."/>
            <person name="Takemoto M."/>
            <person name="Kawakami B."/>
            <person name="Yamazaki M."/>
            <person name="Watanabe K."/>
            <person name="Kumagai A."/>
            <person name="Itakura S."/>
            <person name="Fukuzumi Y."/>
            <person name="Fujimori Y."/>
            <person name="Komiyama M."/>
            <person name="Tashiro H."/>
            <person name="Tanigami A."/>
            <person name="Fujiwara T."/>
            <person name="Ono T."/>
            <person name="Yamada K."/>
            <person name="Fujii Y."/>
            <person name="Ozaki K."/>
            <person name="Hirao M."/>
            <person name="Ohmori Y."/>
            <person name="Kawabata A."/>
            <person name="Hikiji T."/>
            <person name="Kobatake N."/>
            <person name="Inagaki H."/>
            <person name="Ikema Y."/>
            <person name="Okamoto S."/>
            <person name="Okitani R."/>
            <person name="Kawakami T."/>
            <person name="Noguchi S."/>
            <person name="Itoh T."/>
            <person name="Shigeta K."/>
            <person name="Senba T."/>
            <person name="Matsumura K."/>
            <person name="Nakajima Y."/>
            <person name="Mizuno T."/>
            <person name="Morinaga M."/>
            <person name="Sasaki M."/>
            <person name="Togashi T."/>
            <person name="Oyama M."/>
            <person name="Hata H."/>
            <person name="Watanabe M."/>
            <person name="Komatsu T."/>
            <person name="Mizushima-Sugano J."/>
            <person name="Satoh T."/>
            <person name="Shirai Y."/>
            <person name="Takahashi Y."/>
            <person name="Nakagawa K."/>
            <person name="Okumura K."/>
            <person name="Nagase T."/>
            <person name="Nomura N."/>
            <person name="Kikuchi H."/>
            <person name="Masuho Y."/>
            <person name="Yamashita R."/>
            <person name="Nakai K."/>
            <person name="Yada T."/>
            <person name="Nakamura Y."/>
            <person name="Ohara O."/>
            <person name="Isogai T."/>
            <person name="Sugano S."/>
        </authorList>
    </citation>
    <scope>NUCLEOTIDE SEQUENCE [LARGE SCALE MRNA]</scope>
    <source>
        <tissue>Amygdala</tissue>
        <tissue>Brain</tissue>
    </source>
</reference>
<reference key="3">
    <citation type="submission" date="2003-05" db="EMBL/GenBank/DDBJ databases">
        <title>Cloning of human full-length CDSs in BD Creator(TM) system donor vector.</title>
        <authorList>
            <person name="Kalnine N."/>
            <person name="Chen X."/>
            <person name="Rolfs A."/>
            <person name="Halleck A."/>
            <person name="Hines L."/>
            <person name="Eisenstein S."/>
            <person name="Koundinya M."/>
            <person name="Raphael J."/>
            <person name="Moreira D."/>
            <person name="Kelley T."/>
            <person name="LaBaer J."/>
            <person name="Lin Y."/>
            <person name="Phelan M."/>
            <person name="Farmer A."/>
        </authorList>
    </citation>
    <scope>NUCLEOTIDE SEQUENCE [LARGE SCALE MRNA]</scope>
</reference>
<reference key="4">
    <citation type="submission" date="2004-06" db="EMBL/GenBank/DDBJ databases">
        <title>Cloning of human full open reading frames in Gateway(TM) system entry vector (pDONR201).</title>
        <authorList>
            <person name="Ebert L."/>
            <person name="Schick M."/>
            <person name="Neubert P."/>
            <person name="Schatten R."/>
            <person name="Henze S."/>
            <person name="Korn B."/>
        </authorList>
    </citation>
    <scope>NUCLEOTIDE SEQUENCE [LARGE SCALE MRNA]</scope>
</reference>
<reference key="5">
    <citation type="journal article" date="2004" name="Genome Res.">
        <title>The status, quality, and expansion of the NIH full-length cDNA project: the Mammalian Gene Collection (MGC).</title>
        <authorList>
            <consortium name="The MGC Project Team"/>
        </authorList>
    </citation>
    <scope>NUCLEOTIDE SEQUENCE [LARGE SCALE MRNA]</scope>
    <source>
        <tissue>Lung</tissue>
    </source>
</reference>
<reference key="6">
    <citation type="journal article" date="2003" name="J. Biol. Chem.">
        <title>The p34cdc2-related cyclin-dependent kinase 11 interacts with the p47 subunit of eukaryotic initiation factor 3 during apoptosis.</title>
        <authorList>
            <person name="Shi J."/>
            <person name="Feng Y."/>
            <person name="Goulet A.C."/>
            <person name="Vaillancourt R.R."/>
            <person name="Sachs N.A."/>
            <person name="Hershey J.W."/>
            <person name="Nelson M.A."/>
        </authorList>
    </citation>
    <scope>PHOSPHORYLATION AT SER-46</scope>
</reference>
<reference key="7">
    <citation type="journal article" date="2005" name="Cell">
        <title>mTOR and S6K1 mediate assembly of the translation preinitiation complex through dynamic protein interchange and ordered phosphorylation events.</title>
        <authorList>
            <person name="Holz M.K."/>
            <person name="Ballif B.A."/>
            <person name="Gygi S.P."/>
            <person name="Blenis J."/>
        </authorList>
    </citation>
    <scope>INTERACTION WITH RPS6KB1</scope>
    <scope>IDENTIFICATION BY MASS SPECTROMETRY</scope>
</reference>
<reference key="8">
    <citation type="journal article" date="2005" name="RNA">
        <title>Binding of eukaryotic initiation factor 3 to ribosomal 40S subunits and its role in ribosomal dissociation and anti-association.</title>
        <authorList>
            <person name="Kolupaeva V.G."/>
            <person name="Unbehaun A."/>
            <person name="Lomakin I.B."/>
            <person name="Hellen C.U.T."/>
            <person name="Pestova T.V."/>
        </authorList>
    </citation>
    <scope>CHARACTERIZATION OF THE EIF-3 COMPLEX</scope>
</reference>
<reference key="9">
    <citation type="journal article" date="2006" name="J. Biol. Chem.">
        <title>Translation initiation factor eIF4G-1 binds to eIF3 through the eIF3e subunit.</title>
        <authorList>
            <person name="LeFebvre A.K."/>
            <person name="Korneeva N.L."/>
            <person name="Trutschl M."/>
            <person name="Cvek U."/>
            <person name="Duzan R.D."/>
            <person name="Bradley C.A."/>
            <person name="Hershey J.W.B."/>
            <person name="Rhoads R.E."/>
        </authorList>
    </citation>
    <scope>IDENTIFICATION IN THE EIF-3 COMPLEX</scope>
    <scope>IDENTIFICATION BY MASS SPECTROMETRY</scope>
</reference>
<reference key="10">
    <citation type="journal article" date="2007" name="EMBO J.">
        <title>Reconstitution reveals the functional core of mammalian eIF3.</title>
        <authorList>
            <person name="Masutani M."/>
            <person name="Sonenberg N."/>
            <person name="Yokoyama S."/>
            <person name="Imataka H."/>
        </authorList>
    </citation>
    <scope>FUNCTION</scope>
    <scope>CHARACTERIZATION OF THE EIF-3 COMPLEX</scope>
</reference>
<reference key="11">
    <citation type="journal article" date="2007" name="Mol. Cell. Proteomics">
        <title>Structural characterization of the human eukaryotic initiation factor 3 protein complex by mass spectrometry.</title>
        <authorList>
            <person name="Damoc E."/>
            <person name="Fraser C.S."/>
            <person name="Zhou M."/>
            <person name="Videler H."/>
            <person name="Mayeur G.L."/>
            <person name="Hershey J.W.B."/>
            <person name="Doudna J.A."/>
            <person name="Robinson C.V."/>
            <person name="Leary J.A."/>
        </authorList>
    </citation>
    <scope>IDENTIFICATION IN THE EIF-3 COMPLEX</scope>
    <scope>CHARACTERIZATION OF THE EIF-3 COMPLEX</scope>
    <scope>CLEAVAGE OF INITIATOR METHIONINE</scope>
    <scope>ACETYLATION AT ALA-2</scope>
    <scope>PHOSPHORYLATION AT SER-258</scope>
    <scope>MASS SPECTROMETRY</scope>
</reference>
<reference key="12">
    <citation type="journal article" date="2008" name="Proc. Natl. Acad. Sci. U.S.A.">
        <title>A quantitative atlas of mitotic phosphorylation.</title>
        <authorList>
            <person name="Dephoure N."/>
            <person name="Zhou C."/>
            <person name="Villen J."/>
            <person name="Beausoleil S.A."/>
            <person name="Bakalarski C.E."/>
            <person name="Elledge S.J."/>
            <person name="Gygi S.P."/>
        </authorList>
    </citation>
    <scope>PHOSPHORYLATION [LARGE SCALE ANALYSIS] AT SER-258</scope>
    <scope>IDENTIFICATION BY MASS SPECTROMETRY [LARGE SCALE ANALYSIS]</scope>
    <source>
        <tissue>Cervix carcinoma</tissue>
    </source>
</reference>
<reference key="13">
    <citation type="journal article" date="2009" name="Sci. Signal.">
        <title>Quantitative phosphoproteomic analysis of T cell receptor signaling reveals system-wide modulation of protein-protein interactions.</title>
        <authorList>
            <person name="Mayya V."/>
            <person name="Lundgren D.H."/>
            <person name="Hwang S.-I."/>
            <person name="Rezaul K."/>
            <person name="Wu L."/>
            <person name="Eng J.K."/>
            <person name="Rodionov V."/>
            <person name="Han D.K."/>
        </authorList>
    </citation>
    <scope>IDENTIFICATION BY MASS SPECTROMETRY [LARGE SCALE ANALYSIS]</scope>
    <source>
        <tissue>Leukemic T-cell</tissue>
    </source>
</reference>
<reference key="14">
    <citation type="journal article" date="2009" name="Science">
        <title>Lysine acetylation targets protein complexes and co-regulates major cellular functions.</title>
        <authorList>
            <person name="Choudhary C."/>
            <person name="Kumar C."/>
            <person name="Gnad F."/>
            <person name="Nielsen M.L."/>
            <person name="Rehman M."/>
            <person name="Walther T.C."/>
            <person name="Olsen J.V."/>
            <person name="Mann M."/>
        </authorList>
    </citation>
    <scope>ACETYLATION [LARGE SCALE ANALYSIS] AT LYS-238</scope>
    <scope>IDENTIFICATION BY MASS SPECTROMETRY [LARGE SCALE ANALYSIS]</scope>
</reference>
<reference key="15">
    <citation type="journal article" date="2010" name="Mol. Cancer Res.">
        <title>The TRC8 ubiquitin ligase is sterol regulated and interacts with lipid and protein biosynthetic pathways.</title>
        <authorList>
            <person name="Lee J.P."/>
            <person name="Brauweiler A."/>
            <person name="Rudolph M."/>
            <person name="Hooper J.E."/>
            <person name="Drabkin H.A."/>
            <person name="Gemmill R.M."/>
        </authorList>
    </citation>
    <scope>INTERACTION WITH RNF139</scope>
</reference>
<reference key="16">
    <citation type="journal article" date="2008" name="Proc. Natl. Acad. Sci. U.S.A.">
        <title>Mass spectrometry reveals modularity and a complete subunit interaction map of the eukaryotic translation factor eIF3.</title>
        <authorList>
            <person name="Zhou M."/>
            <person name="Sandercock A.M."/>
            <person name="Fraser C.S."/>
            <person name="Ridlova G."/>
            <person name="Stephens E."/>
            <person name="Schenauer M.R."/>
            <person name="Yokoi-Fong T."/>
            <person name="Barsky D."/>
            <person name="Leary J.A."/>
            <person name="Hershey J.W.B."/>
            <person name="Doudna J.A."/>
            <person name="Robinson C.V."/>
        </authorList>
    </citation>
    <scope>IDENTIFICATION IN THE EIF-3 COMPLEX</scope>
    <scope>CHARACTERIZATION OF THE EIF-3 COMPLEX</scope>
    <scope>MASS SPECTROMETRY</scope>
    <scope>INTERACTION WITH EIF3B; EIF3H AND EIF3M</scope>
</reference>
<reference key="17">
    <citation type="journal article" date="2010" name="PLoS Biol.">
        <title>The translation initiation factor 3f (eIF3f) exhibits a deubiquitinase activity regulating Notch activation.</title>
        <authorList>
            <person name="Moretti J."/>
            <person name="Chastagner P."/>
            <person name="Gastaldello S."/>
            <person name="Heuss S.F."/>
            <person name="Dirac A.M."/>
            <person name="Bernards R."/>
            <person name="Masucci M.G."/>
            <person name="Israel A."/>
            <person name="Brou C."/>
        </authorList>
    </citation>
    <scope>FUNCTION AS A DEUBIQUITINATING ENZYME</scope>
    <scope>CATALYTIC ACTIVITY</scope>
    <scope>INTERACTION WITH DTX1</scope>
</reference>
<reference key="18">
    <citation type="journal article" date="2010" name="Sci. Signal.">
        <title>Quantitative phosphoproteomics reveals widespread full phosphorylation site occupancy during mitosis.</title>
        <authorList>
            <person name="Olsen J.V."/>
            <person name="Vermeulen M."/>
            <person name="Santamaria A."/>
            <person name="Kumar C."/>
            <person name="Miller M.L."/>
            <person name="Jensen L.J."/>
            <person name="Gnad F."/>
            <person name="Cox J."/>
            <person name="Jensen T.S."/>
            <person name="Nigg E.A."/>
            <person name="Brunak S."/>
            <person name="Mann M."/>
        </authorList>
    </citation>
    <scope>IDENTIFICATION BY MASS SPECTROMETRY [LARGE SCALE ANALYSIS]</scope>
    <source>
        <tissue>Cervix carcinoma</tissue>
    </source>
</reference>
<reference key="19">
    <citation type="journal article" date="2011" name="BMC Syst. Biol.">
        <title>Initial characterization of the human central proteome.</title>
        <authorList>
            <person name="Burkard T.R."/>
            <person name="Planyavsky M."/>
            <person name="Kaupe I."/>
            <person name="Breitwieser F.P."/>
            <person name="Buerckstuemmer T."/>
            <person name="Bennett K.L."/>
            <person name="Superti-Furga G."/>
            <person name="Colinge J."/>
        </authorList>
    </citation>
    <scope>IDENTIFICATION BY MASS SPECTROMETRY [LARGE SCALE ANALYSIS]</scope>
</reference>
<reference key="20">
    <citation type="journal article" date="2011" name="Sci. Signal.">
        <title>System-wide temporal characterization of the proteome and phosphoproteome of human embryonic stem cell differentiation.</title>
        <authorList>
            <person name="Rigbolt K.T."/>
            <person name="Prokhorova T.A."/>
            <person name="Akimov V."/>
            <person name="Henningsen J."/>
            <person name="Johansen P.T."/>
            <person name="Kratchmarova I."/>
            <person name="Kassem M."/>
            <person name="Mann M."/>
            <person name="Olsen J.V."/>
            <person name="Blagoev B."/>
        </authorList>
    </citation>
    <scope>IDENTIFICATION BY MASS SPECTROMETRY [LARGE SCALE ANALYSIS]</scope>
</reference>
<reference key="21">
    <citation type="journal article" date="2013" name="J. Proteome Res.">
        <title>Toward a comprehensive characterization of a human cancer cell phosphoproteome.</title>
        <authorList>
            <person name="Zhou H."/>
            <person name="Di Palma S."/>
            <person name="Preisinger C."/>
            <person name="Peng M."/>
            <person name="Polat A.N."/>
            <person name="Heck A.J."/>
            <person name="Mohammed S."/>
        </authorList>
    </citation>
    <scope>PHOSPHORYLATION [LARGE SCALE ANALYSIS] AT SER-258</scope>
    <scope>IDENTIFICATION BY MASS SPECTROMETRY [LARGE SCALE ANALYSIS]</scope>
    <source>
        <tissue>Cervix carcinoma</tissue>
        <tissue>Erythroleukemia</tissue>
    </source>
</reference>
<reference key="22">
    <citation type="journal article" date="2014" name="J. Proteomics">
        <title>An enzyme assisted RP-RPLC approach for in-depth analysis of human liver phosphoproteome.</title>
        <authorList>
            <person name="Bian Y."/>
            <person name="Song C."/>
            <person name="Cheng K."/>
            <person name="Dong M."/>
            <person name="Wang F."/>
            <person name="Huang J."/>
            <person name="Sun D."/>
            <person name="Wang L."/>
            <person name="Ye M."/>
            <person name="Zou H."/>
        </authorList>
    </citation>
    <scope>IDENTIFICATION BY MASS SPECTROMETRY [LARGE SCALE ANALYSIS]</scope>
    <source>
        <tissue>Liver</tissue>
    </source>
</reference>
<reference key="23">
    <citation type="journal article" date="2015" name="Nature">
        <title>eIF3 targets cell-proliferation messenger RNAs for translational activation or repression.</title>
        <authorList>
            <person name="Lee A.S."/>
            <person name="Kranzusch P.J."/>
            <person name="Cate J.H."/>
        </authorList>
    </citation>
    <scope>FUNCTION</scope>
    <scope>IDENTIFICATION IN THE EIF-3 COMPLEX</scope>
</reference>
<reference key="24">
    <citation type="journal article" date="2015" name="Proteomics">
        <title>N-terminome analysis of the human mitochondrial proteome.</title>
        <authorList>
            <person name="Vaca Jacome A.S."/>
            <person name="Rabilloud T."/>
            <person name="Schaeffer-Reiss C."/>
            <person name="Rompais M."/>
            <person name="Ayoub D."/>
            <person name="Lane L."/>
            <person name="Bairoch A."/>
            <person name="Van Dorsselaer A."/>
            <person name="Carapito C."/>
        </authorList>
    </citation>
    <scope>IDENTIFICATION BY MASS SPECTROMETRY [LARGE SCALE ANALYSIS]</scope>
</reference>
<reference key="25">
    <citation type="journal article" date="2016" name="Nature">
        <title>eIF3d is an mRNA cap-binding protein that is required for specialized translation initiation.</title>
        <authorList>
            <person name="Lee A.S."/>
            <person name="Kranzusch P.J."/>
            <person name="Doudna J.A."/>
            <person name="Cate J.H."/>
        </authorList>
    </citation>
    <scope>FUNCTION</scope>
</reference>
<reference key="26">
    <citation type="journal article" date="2005" name="Science">
        <title>Structural roles for human translation factor eIF3 in initiation of protein synthesis.</title>
        <authorList>
            <person name="Siridechadilok B."/>
            <person name="Fraser C.S."/>
            <person name="Hall R.J."/>
            <person name="Doudna J.A."/>
            <person name="Nogales E."/>
        </authorList>
    </citation>
    <scope>3D-STRUCTURE MODELING</scope>
    <scope>ELECTRON MICROSCOPY</scope>
</reference>
<reference key="27">
    <citation type="journal article" date="2018" name="Science">
        <title>Quantifying the contribution of recessive coding variation to developmental disorders.</title>
        <authorList>
            <consortium name="Deciphering Developmental Disorders Study"/>
            <person name="Martin H.C."/>
            <person name="Jones W.D."/>
            <person name="McIntyre R."/>
            <person name="Sanchez-Andrade G."/>
            <person name="Sanderson M."/>
            <person name="Stephenson J.D."/>
            <person name="Jones C.P."/>
            <person name="Handsaker J."/>
            <person name="Gallone G."/>
            <person name="Bruntraeger M."/>
            <person name="McRae J.F."/>
            <person name="Prigmore E."/>
            <person name="Short P."/>
            <person name="Niemi M."/>
            <person name="Kaplanis J."/>
            <person name="Radford E.J."/>
            <person name="Akawi N."/>
            <person name="Balasubramanian M."/>
            <person name="Dean J."/>
            <person name="Horton R."/>
            <person name="Hulbert A."/>
            <person name="Johnson D.S."/>
            <person name="Johnson K."/>
            <person name="Kumar D."/>
            <person name="Lynch S.A."/>
            <person name="Mehta S.G."/>
            <person name="Morton J."/>
            <person name="Parker M.J."/>
            <person name="Splitt M."/>
            <person name="Turnpenny P.D."/>
            <person name="Vasudevan P.C."/>
            <person name="Wright M."/>
            <person name="Bassett A."/>
            <person name="Gerety S.S."/>
            <person name="Wright C.F."/>
            <person name="FitzPatrick D.R."/>
            <person name="Firth H.V."/>
            <person name="Hurles M.E."/>
            <person name="Barrett J.C."/>
        </authorList>
    </citation>
    <scope>INVOLVEMENT IN MRT67</scope>
    <scope>VARIANT MRT67 VAL-232</scope>
    <scope>CHARACTERIZATION OF VARIANT MRT67 VAL-232</scope>
</reference>
<protein>
    <recommendedName>
        <fullName evidence="1">Eukaryotic translation initiation factor 3 subunit F</fullName>
        <shortName evidence="1">eIF3f</shortName>
    </recommendedName>
    <alternativeName>
        <fullName>Deubiquitinating enzyme eIF3f</fullName>
        <ecNumber>3.4.19.12</ecNumber>
    </alternativeName>
    <alternativeName>
        <fullName evidence="1">Eukaryotic translation initiation factor 3 subunit 5</fullName>
    </alternativeName>
    <alternativeName>
        <fullName evidence="1">eIF-3-epsilon</fullName>
    </alternativeName>
    <alternativeName>
        <fullName evidence="1">eIF3 p47</fullName>
    </alternativeName>
</protein>
<accession>O00303</accession>
<accession>A8K0S2</accession>
<accession>Q6IB45</accession>
<accession>Q8N978</accession>
<dbReference type="EC" id="3.4.19.12"/>
<dbReference type="EMBL" id="U94855">
    <property type="protein sequence ID" value="AAD03467.1"/>
    <property type="molecule type" value="mRNA"/>
</dbReference>
<dbReference type="EMBL" id="AK095574">
    <property type="protein sequence ID" value="BAC04577.1"/>
    <property type="molecule type" value="mRNA"/>
</dbReference>
<dbReference type="EMBL" id="AK289637">
    <property type="protein sequence ID" value="BAF82326.1"/>
    <property type="molecule type" value="mRNA"/>
</dbReference>
<dbReference type="EMBL" id="AK291354">
    <property type="protein sequence ID" value="BAF84043.1"/>
    <property type="molecule type" value="mRNA"/>
</dbReference>
<dbReference type="EMBL" id="BT006894">
    <property type="protein sequence ID" value="AAP35540.1"/>
    <property type="molecule type" value="mRNA"/>
</dbReference>
<dbReference type="EMBL" id="CR456959">
    <property type="protein sequence ID" value="CAG33240.1"/>
    <property type="molecule type" value="mRNA"/>
</dbReference>
<dbReference type="EMBL" id="BC000490">
    <property type="protein sequence ID" value="AAH00490.1"/>
    <property type="molecule type" value="mRNA"/>
</dbReference>
<dbReference type="CCDS" id="CCDS7785.1"/>
<dbReference type="RefSeq" id="NP_003745.1">
    <property type="nucleotide sequence ID" value="NM_003754.3"/>
</dbReference>
<dbReference type="PDB" id="3J8B">
    <property type="method" value="EM"/>
    <property type="chains" value="F=1-257"/>
</dbReference>
<dbReference type="PDB" id="3J8C">
    <property type="method" value="EM"/>
    <property type="chains" value="F=1-257"/>
</dbReference>
<dbReference type="PDB" id="6YBD">
    <property type="method" value="EM"/>
    <property type="resolution" value="3.30 A"/>
    <property type="chains" value="4=1-357"/>
</dbReference>
<dbReference type="PDB" id="6ZMW">
    <property type="method" value="EM"/>
    <property type="resolution" value="3.70 A"/>
    <property type="chains" value="4=1-357"/>
</dbReference>
<dbReference type="PDB" id="6ZON">
    <property type="method" value="EM"/>
    <property type="resolution" value="3.00 A"/>
    <property type="chains" value="F=1-357"/>
</dbReference>
<dbReference type="PDB" id="6ZP4">
    <property type="method" value="EM"/>
    <property type="resolution" value="2.90 A"/>
    <property type="chains" value="F=1-357"/>
</dbReference>
<dbReference type="PDB" id="6ZVJ">
    <property type="method" value="EM"/>
    <property type="resolution" value="3.80 A"/>
    <property type="chains" value="F=89-357"/>
</dbReference>
<dbReference type="PDB" id="7A09">
    <property type="method" value="EM"/>
    <property type="resolution" value="3.50 A"/>
    <property type="chains" value="F=1-357"/>
</dbReference>
<dbReference type="PDB" id="7QP6">
    <property type="method" value="EM"/>
    <property type="resolution" value="4.70 A"/>
    <property type="chains" value="4=1-357"/>
</dbReference>
<dbReference type="PDB" id="7QP7">
    <property type="method" value="EM"/>
    <property type="resolution" value="3.70 A"/>
    <property type="chains" value="4=1-357"/>
</dbReference>
<dbReference type="PDB" id="8OZ0">
    <property type="method" value="EM"/>
    <property type="resolution" value="3.50 A"/>
    <property type="chains" value="6=1-357"/>
</dbReference>
<dbReference type="PDB" id="8PJ1">
    <property type="method" value="EM"/>
    <property type="resolution" value="3.40 A"/>
    <property type="chains" value="4=1-357"/>
</dbReference>
<dbReference type="PDB" id="8PJ2">
    <property type="method" value="EM"/>
    <property type="resolution" value="3.40 A"/>
    <property type="chains" value="4=1-357"/>
</dbReference>
<dbReference type="PDB" id="8PJ3">
    <property type="method" value="EM"/>
    <property type="resolution" value="3.70 A"/>
    <property type="chains" value="4=1-357"/>
</dbReference>
<dbReference type="PDB" id="8PJ4">
    <property type="method" value="EM"/>
    <property type="resolution" value="3.20 A"/>
    <property type="chains" value="4=1-357"/>
</dbReference>
<dbReference type="PDB" id="8PJ5">
    <property type="method" value="EM"/>
    <property type="resolution" value="2.90 A"/>
    <property type="chains" value="4=1-357"/>
</dbReference>
<dbReference type="PDB" id="8PJ6">
    <property type="method" value="EM"/>
    <property type="resolution" value="2.90 A"/>
    <property type="chains" value="4=1-357"/>
</dbReference>
<dbReference type="PDB" id="8PPL">
    <property type="method" value="EM"/>
    <property type="resolution" value="2.65 A"/>
    <property type="chains" value="I4=1-357"/>
</dbReference>
<dbReference type="PDB" id="8RG0">
    <property type="method" value="EM"/>
    <property type="resolution" value="3.40 A"/>
    <property type="chains" value="4=1-357"/>
</dbReference>
<dbReference type="PDB" id="8XXN">
    <property type="method" value="EM"/>
    <property type="resolution" value="3.60 A"/>
    <property type="chains" value="3F=1-357"/>
</dbReference>
<dbReference type="PDB" id="9BLN">
    <property type="method" value="EM"/>
    <property type="resolution" value="3.90 A"/>
    <property type="chains" value="4=1-357"/>
</dbReference>
<dbReference type="PDBsum" id="3J8B"/>
<dbReference type="PDBsum" id="3J8C"/>
<dbReference type="PDBsum" id="6YBD"/>
<dbReference type="PDBsum" id="6ZMW"/>
<dbReference type="PDBsum" id="6ZON"/>
<dbReference type="PDBsum" id="6ZP4"/>
<dbReference type="PDBsum" id="6ZVJ"/>
<dbReference type="PDBsum" id="7A09"/>
<dbReference type="PDBsum" id="7QP6"/>
<dbReference type="PDBsum" id="7QP7"/>
<dbReference type="PDBsum" id="8OZ0"/>
<dbReference type="PDBsum" id="8PJ1"/>
<dbReference type="PDBsum" id="8PJ2"/>
<dbReference type="PDBsum" id="8PJ3"/>
<dbReference type="PDBsum" id="8PJ4"/>
<dbReference type="PDBsum" id="8PJ5"/>
<dbReference type="PDBsum" id="8PJ6"/>
<dbReference type="PDBsum" id="8PPL"/>
<dbReference type="PDBsum" id="8RG0"/>
<dbReference type="PDBsum" id="8XXN"/>
<dbReference type="PDBsum" id="9BLN"/>
<dbReference type="EMDB" id="EMD-10769"/>
<dbReference type="EMDB" id="EMD-11302"/>
<dbReference type="EMDB" id="EMD-11325"/>
<dbReference type="EMDB" id="EMD-11335"/>
<dbReference type="EMDB" id="EMD-11458"/>
<dbReference type="EMDB" id="EMD-11602"/>
<dbReference type="EMDB" id="EMD-14113"/>
<dbReference type="EMDB" id="EMD-14114"/>
<dbReference type="EMDB" id="EMD-17297"/>
<dbReference type="EMDB" id="EMD-17696"/>
<dbReference type="EMDB" id="EMD-17697"/>
<dbReference type="EMDB" id="EMD-17698"/>
<dbReference type="EMDB" id="EMD-17699"/>
<dbReference type="EMDB" id="EMD-17700"/>
<dbReference type="EMDB" id="EMD-17701"/>
<dbReference type="EMDB" id="EMD-17805"/>
<dbReference type="EMDB" id="EMD-19128"/>
<dbReference type="EMDB" id="EMD-38754"/>
<dbReference type="EMDB" id="EMD-44671"/>
<dbReference type="SMR" id="O00303"/>
<dbReference type="BioGRID" id="114214">
    <property type="interactions" value="311"/>
</dbReference>
<dbReference type="ComplexPortal" id="CPX-6036">
    <property type="entry name" value="Eukaryotic translation initiation factor 3 complex"/>
</dbReference>
<dbReference type="CORUM" id="O00303"/>
<dbReference type="DIP" id="DIP-35580N"/>
<dbReference type="FunCoup" id="O00303">
    <property type="interactions" value="2896"/>
</dbReference>
<dbReference type="IntAct" id="O00303">
    <property type="interactions" value="159"/>
</dbReference>
<dbReference type="MINT" id="O00303"/>
<dbReference type="STRING" id="9606.ENSP00000431800"/>
<dbReference type="ChEMBL" id="CHEMBL2062352"/>
<dbReference type="DrugBank" id="DB04216">
    <property type="generic name" value="Quercetin"/>
</dbReference>
<dbReference type="MEROPS" id="M67.974"/>
<dbReference type="GlyGen" id="O00303">
    <property type="glycosylation" value="4 sites, 1 O-linked glycan (1 site)"/>
</dbReference>
<dbReference type="iPTMnet" id="O00303"/>
<dbReference type="MetOSite" id="O00303"/>
<dbReference type="PhosphoSitePlus" id="O00303"/>
<dbReference type="SwissPalm" id="O00303"/>
<dbReference type="BioMuta" id="EIF3F"/>
<dbReference type="jPOST" id="O00303"/>
<dbReference type="MassIVE" id="O00303"/>
<dbReference type="PaxDb" id="9606-ENSP00000431800"/>
<dbReference type="PeptideAtlas" id="O00303"/>
<dbReference type="ProteomicsDB" id="47830"/>
<dbReference type="Pumba" id="O00303"/>
<dbReference type="Antibodypedia" id="11428">
    <property type="antibodies" value="244 antibodies from 31 providers"/>
</dbReference>
<dbReference type="DNASU" id="8665"/>
<dbReference type="Ensembl" id="ENST00000533626.5">
    <property type="protein sequence ID" value="ENSP00000431800.1"/>
    <property type="gene ID" value="ENSG00000175390.15"/>
</dbReference>
<dbReference type="Ensembl" id="ENST00000651655.1">
    <property type="protein sequence ID" value="ENSP00000499218.1"/>
    <property type="gene ID" value="ENSG00000175390.15"/>
</dbReference>
<dbReference type="GeneID" id="8665"/>
<dbReference type="KEGG" id="hsa:8665"/>
<dbReference type="MANE-Select" id="ENST00000651655.1">
    <property type="protein sequence ID" value="ENSP00000499218.1"/>
    <property type="RefSeq nucleotide sequence ID" value="NM_003754.3"/>
    <property type="RefSeq protein sequence ID" value="NP_003745.1"/>
</dbReference>
<dbReference type="UCSC" id="uc001mfw.5">
    <property type="organism name" value="human"/>
</dbReference>
<dbReference type="AGR" id="HGNC:3275"/>
<dbReference type="CTD" id="8665"/>
<dbReference type="DisGeNET" id="8665"/>
<dbReference type="GeneCards" id="EIF3F"/>
<dbReference type="HGNC" id="HGNC:3275">
    <property type="gene designation" value="EIF3F"/>
</dbReference>
<dbReference type="HPA" id="ENSG00000175390">
    <property type="expression patterns" value="Low tissue specificity"/>
</dbReference>
<dbReference type="MalaCards" id="EIF3F"/>
<dbReference type="MIM" id="603914">
    <property type="type" value="gene"/>
</dbReference>
<dbReference type="MIM" id="618295">
    <property type="type" value="phenotype"/>
</dbReference>
<dbReference type="neXtProt" id="NX_O00303"/>
<dbReference type="OpenTargets" id="ENSG00000175390"/>
<dbReference type="PharmGKB" id="PA162384806"/>
<dbReference type="VEuPathDB" id="HostDB:ENSG00000175390"/>
<dbReference type="eggNOG" id="KOG2975">
    <property type="taxonomic scope" value="Eukaryota"/>
</dbReference>
<dbReference type="GeneTree" id="ENSGT00950000183073"/>
<dbReference type="HOGENOM" id="CLU_027018_0_1_1"/>
<dbReference type="InParanoid" id="O00303"/>
<dbReference type="OMA" id="EYFVHFH"/>
<dbReference type="OrthoDB" id="9533520at2759"/>
<dbReference type="PAN-GO" id="O00303">
    <property type="GO annotations" value="4 GO annotations based on evolutionary models"/>
</dbReference>
<dbReference type="PhylomeDB" id="O00303"/>
<dbReference type="TreeFam" id="TF101517"/>
<dbReference type="PathwayCommons" id="O00303"/>
<dbReference type="Reactome" id="R-HSA-156827">
    <property type="pathway name" value="L13a-mediated translational silencing of Ceruloplasmin expression"/>
</dbReference>
<dbReference type="Reactome" id="R-HSA-72649">
    <property type="pathway name" value="Translation initiation complex formation"/>
</dbReference>
<dbReference type="Reactome" id="R-HSA-72689">
    <property type="pathway name" value="Formation of a pool of free 40S subunits"/>
</dbReference>
<dbReference type="Reactome" id="R-HSA-72695">
    <property type="pathway name" value="Formation of the ternary complex, and subsequently, the 43S complex"/>
</dbReference>
<dbReference type="Reactome" id="R-HSA-72702">
    <property type="pathway name" value="Ribosomal scanning and start codon recognition"/>
</dbReference>
<dbReference type="Reactome" id="R-HSA-72706">
    <property type="pathway name" value="GTP hydrolysis and joining of the 60S ribosomal subunit"/>
</dbReference>
<dbReference type="SignaLink" id="O00303"/>
<dbReference type="SIGNOR" id="O00303"/>
<dbReference type="BioGRID-ORCS" id="8665">
    <property type="hits" value="771 hits in 1173 CRISPR screens"/>
</dbReference>
<dbReference type="CD-CODE" id="DEE660B4">
    <property type="entry name" value="Stress granule"/>
</dbReference>
<dbReference type="ChiTaRS" id="EIF3F">
    <property type="organism name" value="human"/>
</dbReference>
<dbReference type="EvolutionaryTrace" id="O00303"/>
<dbReference type="GeneWiki" id="EIF3F"/>
<dbReference type="GenomeRNAi" id="8665"/>
<dbReference type="Pharos" id="O00303">
    <property type="development level" value="Tbio"/>
</dbReference>
<dbReference type="PRO" id="PR:O00303"/>
<dbReference type="Proteomes" id="UP000005640">
    <property type="component" value="Chromosome 11"/>
</dbReference>
<dbReference type="RNAct" id="O00303">
    <property type="molecule type" value="protein"/>
</dbReference>
<dbReference type="Bgee" id="ENSG00000175390">
    <property type="expression patterns" value="Expressed in primordial germ cell in gonad and 179 other cell types or tissues"/>
</dbReference>
<dbReference type="ExpressionAtlas" id="O00303">
    <property type="expression patterns" value="baseline and differential"/>
</dbReference>
<dbReference type="GO" id="GO:0005829">
    <property type="term" value="C:cytosol"/>
    <property type="evidence" value="ECO:0000304"/>
    <property type="project" value="Reactome"/>
</dbReference>
<dbReference type="GO" id="GO:0016282">
    <property type="term" value="C:eukaryotic 43S preinitiation complex"/>
    <property type="evidence" value="ECO:0007669"/>
    <property type="project" value="UniProtKB-UniRule"/>
</dbReference>
<dbReference type="GO" id="GO:0033290">
    <property type="term" value="C:eukaryotic 48S preinitiation complex"/>
    <property type="evidence" value="ECO:0007669"/>
    <property type="project" value="UniProtKB-UniRule"/>
</dbReference>
<dbReference type="GO" id="GO:0005852">
    <property type="term" value="C:eukaryotic translation initiation factor 3 complex"/>
    <property type="evidence" value="ECO:0000314"/>
    <property type="project" value="UniProtKB"/>
</dbReference>
<dbReference type="GO" id="GO:0071541">
    <property type="term" value="C:eukaryotic translation initiation factor 3 complex, eIF3m"/>
    <property type="evidence" value="ECO:0000318"/>
    <property type="project" value="GO_Central"/>
</dbReference>
<dbReference type="GO" id="GO:0016020">
    <property type="term" value="C:membrane"/>
    <property type="evidence" value="ECO:0007005"/>
    <property type="project" value="UniProtKB"/>
</dbReference>
<dbReference type="GO" id="GO:0045202">
    <property type="term" value="C:synapse"/>
    <property type="evidence" value="ECO:0007669"/>
    <property type="project" value="Ensembl"/>
</dbReference>
<dbReference type="GO" id="GO:0004843">
    <property type="term" value="F:cysteine-type deubiquitinase activity"/>
    <property type="evidence" value="ECO:0007669"/>
    <property type="project" value="UniProtKB-EC"/>
</dbReference>
<dbReference type="GO" id="GO:0042802">
    <property type="term" value="F:identical protein binding"/>
    <property type="evidence" value="ECO:0000353"/>
    <property type="project" value="IntAct"/>
</dbReference>
<dbReference type="GO" id="GO:0140492">
    <property type="term" value="F:metal-dependent deubiquitinase activity"/>
    <property type="evidence" value="ECO:0000314"/>
    <property type="project" value="FlyBase"/>
</dbReference>
<dbReference type="GO" id="GO:0003743">
    <property type="term" value="F:translation initiation factor activity"/>
    <property type="evidence" value="ECO:0000304"/>
    <property type="project" value="UniProtKB"/>
</dbReference>
<dbReference type="GO" id="GO:0031369">
    <property type="term" value="F:translation initiation factor binding"/>
    <property type="evidence" value="ECO:0000318"/>
    <property type="project" value="GO_Central"/>
</dbReference>
<dbReference type="GO" id="GO:0001732">
    <property type="term" value="P:formation of cytoplasmic translation initiation complex"/>
    <property type="evidence" value="ECO:0000303"/>
    <property type="project" value="ComplexPortal"/>
</dbReference>
<dbReference type="GO" id="GO:0075522">
    <property type="term" value="P:IRES-dependent viral translational initiation"/>
    <property type="evidence" value="ECO:0000314"/>
    <property type="project" value="UniProtKB"/>
</dbReference>
<dbReference type="GO" id="GO:0006508">
    <property type="term" value="P:proteolysis"/>
    <property type="evidence" value="ECO:0007669"/>
    <property type="project" value="UniProtKB-KW"/>
</dbReference>
<dbReference type="GO" id="GO:0006413">
    <property type="term" value="P:translational initiation"/>
    <property type="evidence" value="ECO:0000314"/>
    <property type="project" value="UniProtKB"/>
</dbReference>
<dbReference type="CDD" id="cd08064">
    <property type="entry name" value="MPN_eIF3f"/>
    <property type="match status" value="1"/>
</dbReference>
<dbReference type="FunFam" id="3.40.140.10:FF:000014">
    <property type="entry name" value="Eukaryotic translation initiation factor 3 subunit F"/>
    <property type="match status" value="1"/>
</dbReference>
<dbReference type="Gene3D" id="3.40.140.10">
    <property type="entry name" value="Cytidine Deaminase, domain 2"/>
    <property type="match status" value="1"/>
</dbReference>
<dbReference type="HAMAP" id="MF_03005">
    <property type="entry name" value="eIF3f"/>
    <property type="match status" value="1"/>
</dbReference>
<dbReference type="InterPro" id="IPR027531">
    <property type="entry name" value="eIF3f"/>
</dbReference>
<dbReference type="InterPro" id="IPR024969">
    <property type="entry name" value="EIF3F/CSN6-like_C"/>
</dbReference>
<dbReference type="InterPro" id="IPR000555">
    <property type="entry name" value="JAMM/MPN+_dom"/>
</dbReference>
<dbReference type="InterPro" id="IPR037518">
    <property type="entry name" value="MPN"/>
</dbReference>
<dbReference type="PANTHER" id="PTHR10540:SF6">
    <property type="entry name" value="EUKARYOTIC TRANSLATION INITIATION FACTOR 3 SUBUNIT F"/>
    <property type="match status" value="1"/>
</dbReference>
<dbReference type="PANTHER" id="PTHR10540">
    <property type="entry name" value="EUKARYOTIC TRANSLATION INITIATION FACTOR 3 SUBUNIT F-RELATED"/>
    <property type="match status" value="1"/>
</dbReference>
<dbReference type="Pfam" id="PF01398">
    <property type="entry name" value="JAB"/>
    <property type="match status" value="1"/>
</dbReference>
<dbReference type="Pfam" id="PF13012">
    <property type="entry name" value="MitMem_reg"/>
    <property type="match status" value="1"/>
</dbReference>
<dbReference type="SMART" id="SM00232">
    <property type="entry name" value="JAB_MPN"/>
    <property type="match status" value="1"/>
</dbReference>
<dbReference type="PROSITE" id="PS50249">
    <property type="entry name" value="MPN"/>
    <property type="match status" value="1"/>
</dbReference>
<gene>
    <name evidence="1" type="primary">EIF3F</name>
    <name evidence="1" type="synonym">EIF3S5</name>
</gene>